<feature type="chain" id="PRO_1000051988" description="DNA-directed RNA polymerase subunit gamma">
    <location>
        <begin position="1"/>
        <end position="625"/>
    </location>
</feature>
<feature type="binding site" evidence="1">
    <location>
        <position position="71"/>
    </location>
    <ligand>
        <name>Zn(2+)</name>
        <dbReference type="ChEBI" id="CHEBI:29105"/>
    </ligand>
</feature>
<feature type="binding site" evidence="1">
    <location>
        <position position="73"/>
    </location>
    <ligand>
        <name>Zn(2+)</name>
        <dbReference type="ChEBI" id="CHEBI:29105"/>
    </ligand>
</feature>
<feature type="binding site" evidence="1">
    <location>
        <position position="86"/>
    </location>
    <ligand>
        <name>Zn(2+)</name>
        <dbReference type="ChEBI" id="CHEBI:29105"/>
    </ligand>
</feature>
<feature type="binding site" evidence="1">
    <location>
        <position position="89"/>
    </location>
    <ligand>
        <name>Zn(2+)</name>
        <dbReference type="ChEBI" id="CHEBI:29105"/>
    </ligand>
</feature>
<feature type="binding site" evidence="1">
    <location>
        <position position="467"/>
    </location>
    <ligand>
        <name>Mg(2+)</name>
        <dbReference type="ChEBI" id="CHEBI:18420"/>
    </ligand>
</feature>
<feature type="binding site" evidence="1">
    <location>
        <position position="469"/>
    </location>
    <ligand>
        <name>Mg(2+)</name>
        <dbReference type="ChEBI" id="CHEBI:18420"/>
    </ligand>
</feature>
<feature type="binding site" evidence="1">
    <location>
        <position position="471"/>
    </location>
    <ligand>
        <name>Mg(2+)</name>
        <dbReference type="ChEBI" id="CHEBI:18420"/>
    </ligand>
</feature>
<organism>
    <name type="scientific">Trichormus variabilis (strain ATCC 29413 / PCC 7937)</name>
    <name type="common">Anabaena variabilis</name>
    <dbReference type="NCBI Taxonomy" id="240292"/>
    <lineage>
        <taxon>Bacteria</taxon>
        <taxon>Bacillati</taxon>
        <taxon>Cyanobacteriota</taxon>
        <taxon>Cyanophyceae</taxon>
        <taxon>Nostocales</taxon>
        <taxon>Nostocaceae</taxon>
        <taxon>Trichormus</taxon>
    </lineage>
</organism>
<protein>
    <recommendedName>
        <fullName evidence="1">DNA-directed RNA polymerase subunit gamma</fullName>
        <shortName evidence="1">RNAP subunit gamma</shortName>
        <ecNumber evidence="1">2.7.7.6</ecNumber>
    </recommendedName>
    <alternativeName>
        <fullName evidence="1">RNA polymerase subunit gamma</fullName>
    </alternativeName>
    <alternativeName>
        <fullName evidence="1">Transcriptase subunit gamma</fullName>
    </alternativeName>
</protein>
<gene>
    <name evidence="1" type="primary">rpoC1</name>
    <name type="ordered locus">Ava_4208</name>
</gene>
<dbReference type="EC" id="2.7.7.6" evidence="1"/>
<dbReference type="EMBL" id="CP000117">
    <property type="protein sequence ID" value="ABA23807.1"/>
    <property type="molecule type" value="Genomic_DNA"/>
</dbReference>
<dbReference type="SMR" id="Q3M5C9"/>
<dbReference type="STRING" id="240292.Ava_4208"/>
<dbReference type="KEGG" id="ava:Ava_4208"/>
<dbReference type="eggNOG" id="COG0086">
    <property type="taxonomic scope" value="Bacteria"/>
</dbReference>
<dbReference type="HOGENOM" id="CLU_030022_2_0_3"/>
<dbReference type="Proteomes" id="UP000002533">
    <property type="component" value="Chromosome"/>
</dbReference>
<dbReference type="GO" id="GO:0000428">
    <property type="term" value="C:DNA-directed RNA polymerase complex"/>
    <property type="evidence" value="ECO:0007669"/>
    <property type="project" value="UniProtKB-KW"/>
</dbReference>
<dbReference type="GO" id="GO:0003677">
    <property type="term" value="F:DNA binding"/>
    <property type="evidence" value="ECO:0007669"/>
    <property type="project" value="UniProtKB-UniRule"/>
</dbReference>
<dbReference type="GO" id="GO:0003899">
    <property type="term" value="F:DNA-directed RNA polymerase activity"/>
    <property type="evidence" value="ECO:0007669"/>
    <property type="project" value="UniProtKB-UniRule"/>
</dbReference>
<dbReference type="GO" id="GO:0000287">
    <property type="term" value="F:magnesium ion binding"/>
    <property type="evidence" value="ECO:0007669"/>
    <property type="project" value="UniProtKB-UniRule"/>
</dbReference>
<dbReference type="GO" id="GO:0008270">
    <property type="term" value="F:zinc ion binding"/>
    <property type="evidence" value="ECO:0007669"/>
    <property type="project" value="UniProtKB-UniRule"/>
</dbReference>
<dbReference type="GO" id="GO:0006351">
    <property type="term" value="P:DNA-templated transcription"/>
    <property type="evidence" value="ECO:0007669"/>
    <property type="project" value="UniProtKB-UniRule"/>
</dbReference>
<dbReference type="CDD" id="cd01609">
    <property type="entry name" value="RNAP_beta'_N"/>
    <property type="match status" value="1"/>
</dbReference>
<dbReference type="Gene3D" id="1.10.40.90">
    <property type="match status" value="1"/>
</dbReference>
<dbReference type="Gene3D" id="2.40.40.20">
    <property type="match status" value="1"/>
</dbReference>
<dbReference type="Gene3D" id="4.10.860.120">
    <property type="entry name" value="RNA polymerase II, clamp domain"/>
    <property type="match status" value="1"/>
</dbReference>
<dbReference type="Gene3D" id="1.10.274.100">
    <property type="entry name" value="RNA polymerase Rpb1, domain 3"/>
    <property type="match status" value="1"/>
</dbReference>
<dbReference type="HAMAP" id="MF_01323">
    <property type="entry name" value="RNApol_bact_RpoC1"/>
    <property type="match status" value="1"/>
</dbReference>
<dbReference type="InterPro" id="IPR012755">
    <property type="entry name" value="DNA-dir_RpoC1_gamma"/>
</dbReference>
<dbReference type="InterPro" id="IPR045867">
    <property type="entry name" value="DNA-dir_RpoC_beta_prime"/>
</dbReference>
<dbReference type="InterPro" id="IPR000722">
    <property type="entry name" value="RNA_pol_asu"/>
</dbReference>
<dbReference type="InterPro" id="IPR006592">
    <property type="entry name" value="RNA_pol_N"/>
</dbReference>
<dbReference type="InterPro" id="IPR007080">
    <property type="entry name" value="RNA_pol_Rpb1_1"/>
</dbReference>
<dbReference type="InterPro" id="IPR007066">
    <property type="entry name" value="RNA_pol_Rpb1_3"/>
</dbReference>
<dbReference type="InterPro" id="IPR042102">
    <property type="entry name" value="RNA_pol_Rpb1_3_sf"/>
</dbReference>
<dbReference type="InterPro" id="IPR044893">
    <property type="entry name" value="RNA_pol_Rpb1_clamp_domain"/>
</dbReference>
<dbReference type="InterPro" id="IPR034678">
    <property type="entry name" value="RNApol_RpoC1"/>
</dbReference>
<dbReference type="NCBIfam" id="NF002729">
    <property type="entry name" value="PRK02625.1"/>
    <property type="match status" value="1"/>
</dbReference>
<dbReference type="NCBIfam" id="TIGR02387">
    <property type="entry name" value="rpoC1_cyan"/>
    <property type="match status" value="1"/>
</dbReference>
<dbReference type="PANTHER" id="PTHR19376">
    <property type="entry name" value="DNA-DIRECTED RNA POLYMERASE"/>
    <property type="match status" value="1"/>
</dbReference>
<dbReference type="PANTHER" id="PTHR19376:SF54">
    <property type="entry name" value="DNA-DIRECTED RNA POLYMERASE SUBUNIT BETA"/>
    <property type="match status" value="1"/>
</dbReference>
<dbReference type="Pfam" id="PF04997">
    <property type="entry name" value="RNA_pol_Rpb1_1"/>
    <property type="match status" value="1"/>
</dbReference>
<dbReference type="Pfam" id="PF00623">
    <property type="entry name" value="RNA_pol_Rpb1_2"/>
    <property type="match status" value="2"/>
</dbReference>
<dbReference type="Pfam" id="PF04983">
    <property type="entry name" value="RNA_pol_Rpb1_3"/>
    <property type="match status" value="1"/>
</dbReference>
<dbReference type="SMART" id="SM00663">
    <property type="entry name" value="RPOLA_N"/>
    <property type="match status" value="1"/>
</dbReference>
<dbReference type="SUPFAM" id="SSF64484">
    <property type="entry name" value="beta and beta-prime subunits of DNA dependent RNA-polymerase"/>
    <property type="match status" value="1"/>
</dbReference>
<comment type="function">
    <text evidence="1">DNA-dependent RNA polymerase catalyzes the transcription of DNA into RNA using the four ribonucleoside triphosphates as substrates.</text>
</comment>
<comment type="catalytic activity">
    <reaction evidence="1">
        <text>RNA(n) + a ribonucleoside 5'-triphosphate = RNA(n+1) + diphosphate</text>
        <dbReference type="Rhea" id="RHEA:21248"/>
        <dbReference type="Rhea" id="RHEA-COMP:14527"/>
        <dbReference type="Rhea" id="RHEA-COMP:17342"/>
        <dbReference type="ChEBI" id="CHEBI:33019"/>
        <dbReference type="ChEBI" id="CHEBI:61557"/>
        <dbReference type="ChEBI" id="CHEBI:140395"/>
        <dbReference type="EC" id="2.7.7.6"/>
    </reaction>
</comment>
<comment type="cofactor">
    <cofactor evidence="1">
        <name>Mg(2+)</name>
        <dbReference type="ChEBI" id="CHEBI:18420"/>
    </cofactor>
    <text evidence="1">Binds 1 Mg(2+) ion per subunit.</text>
</comment>
<comment type="cofactor">
    <cofactor evidence="1">
        <name>Zn(2+)</name>
        <dbReference type="ChEBI" id="CHEBI:29105"/>
    </cofactor>
    <text evidence="1">Binds 1 Zn(2+) ion per subunit.</text>
</comment>
<comment type="subunit">
    <text evidence="1">In cyanobacteria the RNAP catalytic core is composed of 2 alpha, 1 beta, 1 beta', 1 gamma and 1 omega subunit. When a sigma factor is associated with the core the holoenzyme is formed, which can initiate transcription.</text>
</comment>
<comment type="similarity">
    <text evidence="1">Belongs to the RNA polymerase beta' chain family. RpoC1 subfamily.</text>
</comment>
<evidence type="ECO:0000255" key="1">
    <source>
        <dbReference type="HAMAP-Rule" id="MF_01323"/>
    </source>
</evidence>
<accession>Q3M5C9</accession>
<reference key="1">
    <citation type="journal article" date="2014" name="Stand. Genomic Sci.">
        <title>Complete genome sequence of Anabaena variabilis ATCC 29413.</title>
        <authorList>
            <person name="Thiel T."/>
            <person name="Pratte B.S."/>
            <person name="Zhong J."/>
            <person name="Goodwin L."/>
            <person name="Copeland A."/>
            <person name="Lucas S."/>
            <person name="Han C."/>
            <person name="Pitluck S."/>
            <person name="Land M.L."/>
            <person name="Kyrpides N.C."/>
            <person name="Woyke T."/>
        </authorList>
    </citation>
    <scope>NUCLEOTIDE SEQUENCE [LARGE SCALE GENOMIC DNA]</scope>
    <source>
        <strain>ATCC 29413 / PCC 7937</strain>
    </source>
</reference>
<proteinExistence type="inferred from homology"/>
<sequence length="625" mass="70584">MRPAQTNQFDYVKIGLASPERIRQWGERTLPNGQVVGEVTKPETINYRTLKPEMDGLFCERIFGPAKDWECHCGKYKRVRHRGIVCERCGVEVTESRVRRHRMGYIKLAAPVAHVWYLKGIPSYISILLDMPLRDVEQIVYFNSYVVLSPGNAETLTYKQLLSEDQWLEIEDQIYSEDSQLQGVEVGIGAEALLRLLADINLEQEAESLREEIGSAKGQKRAKLIKRLRVIDNFIATGSKPEWMVMTVIPVIPPDLRPMVQLDGGRFATSDLNDLYRRVINRNNRLARLQEILAPEIIVRNEKRMLQEAVDALIDNGRRGRTVVGANNRPLKSLSDIIEGKQGRFRQNLLGKRVDYSGRSVIVVGPKLKIHQCGLPREMAIELFQPFVINRLIRSGMVNNIKAAKKLISRNDPSVWDVLEEVIEGHPVMLNRAPTLHRLGIQAFEPILVEGRAIQLHPLVCPAFNADFDGDQMAVHVPLSLESQAEARLLMLASNNILSPATGRPIITPSQDMVLGAYYLTAENPGATKGAGKYFASLDDVIMAFQQEQIDLHAYIYVRFDGEVESDQPDTDPLEVTNNDDGSRTVLYKYRRVREDAQGNLISQYVRTTPGRVIYNKAIQEALAS</sequence>
<keyword id="KW-0240">DNA-directed RNA polymerase</keyword>
<keyword id="KW-0460">Magnesium</keyword>
<keyword id="KW-0479">Metal-binding</keyword>
<keyword id="KW-0548">Nucleotidyltransferase</keyword>
<keyword id="KW-0804">Transcription</keyword>
<keyword id="KW-0808">Transferase</keyword>
<keyword id="KW-0862">Zinc</keyword>
<name>RPOC1_TRIV2</name>